<name>PSD_BORA1</name>
<reference key="1">
    <citation type="journal article" date="2006" name="J. Bacteriol.">
        <title>Comparison of the genome sequence of the poultry pathogen Bordetella avium with those of B. bronchiseptica, B. pertussis, and B. parapertussis reveals extensive diversity in surface structures associated with host interaction.</title>
        <authorList>
            <person name="Sebaihia M."/>
            <person name="Preston A."/>
            <person name="Maskell D.J."/>
            <person name="Kuzmiak H."/>
            <person name="Connell T.D."/>
            <person name="King N.D."/>
            <person name="Orndorff P.E."/>
            <person name="Miyamoto D.M."/>
            <person name="Thomson N.R."/>
            <person name="Harris D."/>
            <person name="Goble A."/>
            <person name="Lord A."/>
            <person name="Murphy L."/>
            <person name="Quail M.A."/>
            <person name="Rutter S."/>
            <person name="Squares R."/>
            <person name="Squares S."/>
            <person name="Woodward J."/>
            <person name="Parkhill J."/>
            <person name="Temple L.M."/>
        </authorList>
    </citation>
    <scope>NUCLEOTIDE SEQUENCE [LARGE SCALE GENOMIC DNA]</scope>
    <source>
        <strain>197N</strain>
    </source>
</reference>
<evidence type="ECO:0000255" key="1">
    <source>
        <dbReference type="HAMAP-Rule" id="MF_00662"/>
    </source>
</evidence>
<comment type="function">
    <text evidence="1">Catalyzes the formation of phosphatidylethanolamine (PtdEtn) from phosphatidylserine (PtdSer).</text>
</comment>
<comment type="catalytic activity">
    <reaction evidence="1">
        <text>a 1,2-diacyl-sn-glycero-3-phospho-L-serine + H(+) = a 1,2-diacyl-sn-glycero-3-phosphoethanolamine + CO2</text>
        <dbReference type="Rhea" id="RHEA:20828"/>
        <dbReference type="ChEBI" id="CHEBI:15378"/>
        <dbReference type="ChEBI" id="CHEBI:16526"/>
        <dbReference type="ChEBI" id="CHEBI:57262"/>
        <dbReference type="ChEBI" id="CHEBI:64612"/>
        <dbReference type="EC" id="4.1.1.65"/>
    </reaction>
</comment>
<comment type="cofactor">
    <cofactor evidence="1">
        <name>pyruvate</name>
        <dbReference type="ChEBI" id="CHEBI:15361"/>
    </cofactor>
    <text evidence="1">Binds 1 pyruvoyl group covalently per subunit.</text>
</comment>
<comment type="pathway">
    <text evidence="1">Phospholipid metabolism; phosphatidylethanolamine biosynthesis; phosphatidylethanolamine from CDP-diacylglycerol: step 2/2.</text>
</comment>
<comment type="subunit">
    <text evidence="1">Heterodimer of a large membrane-associated beta subunit and a small pyruvoyl-containing alpha subunit.</text>
</comment>
<comment type="subcellular location">
    <subcellularLocation>
        <location evidence="1">Cell membrane</location>
        <topology evidence="1">Peripheral membrane protein</topology>
    </subcellularLocation>
</comment>
<comment type="PTM">
    <text evidence="1">Is synthesized initially as an inactive proenzyme. Formation of the active enzyme involves a self-maturation process in which the active site pyruvoyl group is generated from an internal serine residue via an autocatalytic post-translational modification. Two non-identical subunits are generated from the proenzyme in this reaction, and the pyruvate is formed at the N-terminus of the alpha chain, which is derived from the carboxyl end of the proenzyme. The autoendoproteolytic cleavage occurs by a canonical serine protease mechanism, in which the side chain hydroxyl group of the serine supplies its oxygen atom to form the C-terminus of the beta chain, while the remainder of the serine residue undergoes an oxidative deamination to produce ammonia and the pyruvoyl prosthetic group on the alpha chain. During this reaction, the Ser that is part of the protease active site of the proenzyme becomes the pyruvoyl prosthetic group, which constitutes an essential element of the active site of the mature decarboxylase.</text>
</comment>
<comment type="similarity">
    <text evidence="1">Belongs to the phosphatidylserine decarboxylase family. PSD-B subfamily. Prokaryotic type I sub-subfamily.</text>
</comment>
<organism>
    <name type="scientific">Bordetella avium (strain 197N)</name>
    <dbReference type="NCBI Taxonomy" id="360910"/>
    <lineage>
        <taxon>Bacteria</taxon>
        <taxon>Pseudomonadati</taxon>
        <taxon>Pseudomonadota</taxon>
        <taxon>Betaproteobacteria</taxon>
        <taxon>Burkholderiales</taxon>
        <taxon>Alcaligenaceae</taxon>
        <taxon>Bordetella</taxon>
    </lineage>
</organism>
<dbReference type="EC" id="4.1.1.65" evidence="1"/>
<dbReference type="EMBL" id="AM167904">
    <property type="protein sequence ID" value="CAJ49491.1"/>
    <property type="molecule type" value="Genomic_DNA"/>
</dbReference>
<dbReference type="RefSeq" id="WP_012417550.1">
    <property type="nucleotide sequence ID" value="NC_010645.1"/>
</dbReference>
<dbReference type="SMR" id="Q2L0K8"/>
<dbReference type="STRING" id="360910.BAV1882"/>
<dbReference type="KEGG" id="bav:BAV1882"/>
<dbReference type="eggNOG" id="COG0688">
    <property type="taxonomic scope" value="Bacteria"/>
</dbReference>
<dbReference type="HOGENOM" id="CLU_029061_4_1_4"/>
<dbReference type="OrthoDB" id="9802030at2"/>
<dbReference type="UniPathway" id="UPA00558">
    <property type="reaction ID" value="UER00616"/>
</dbReference>
<dbReference type="Proteomes" id="UP000001977">
    <property type="component" value="Chromosome"/>
</dbReference>
<dbReference type="GO" id="GO:0005886">
    <property type="term" value="C:plasma membrane"/>
    <property type="evidence" value="ECO:0007669"/>
    <property type="project" value="UniProtKB-SubCell"/>
</dbReference>
<dbReference type="GO" id="GO:0004609">
    <property type="term" value="F:phosphatidylserine decarboxylase activity"/>
    <property type="evidence" value="ECO:0007669"/>
    <property type="project" value="UniProtKB-UniRule"/>
</dbReference>
<dbReference type="GO" id="GO:0006646">
    <property type="term" value="P:phosphatidylethanolamine biosynthetic process"/>
    <property type="evidence" value="ECO:0007669"/>
    <property type="project" value="UniProtKB-UniRule"/>
</dbReference>
<dbReference type="HAMAP" id="MF_00662">
    <property type="entry name" value="PS_decarb_PSD_B_type1"/>
    <property type="match status" value="1"/>
</dbReference>
<dbReference type="InterPro" id="IPR003817">
    <property type="entry name" value="PS_Dcarbxylase"/>
</dbReference>
<dbReference type="InterPro" id="IPR033177">
    <property type="entry name" value="PSD-B"/>
</dbReference>
<dbReference type="InterPro" id="IPR033178">
    <property type="entry name" value="PSD_type1_pro"/>
</dbReference>
<dbReference type="NCBIfam" id="TIGR00163">
    <property type="entry name" value="PS_decarb"/>
    <property type="match status" value="1"/>
</dbReference>
<dbReference type="PANTHER" id="PTHR10067">
    <property type="entry name" value="PHOSPHATIDYLSERINE DECARBOXYLASE"/>
    <property type="match status" value="1"/>
</dbReference>
<dbReference type="PANTHER" id="PTHR10067:SF6">
    <property type="entry name" value="PHOSPHATIDYLSERINE DECARBOXYLASE PROENZYME, MITOCHONDRIAL"/>
    <property type="match status" value="1"/>
</dbReference>
<dbReference type="Pfam" id="PF02666">
    <property type="entry name" value="PS_Dcarbxylase"/>
    <property type="match status" value="1"/>
</dbReference>
<feature type="chain" id="PRO_0000262097" description="Phosphatidylserine decarboxylase beta chain" evidence="1">
    <location>
        <begin position="1"/>
        <end position="251"/>
    </location>
</feature>
<feature type="chain" id="PRO_0000262098" description="Phosphatidylserine decarboxylase alpha chain" evidence="1">
    <location>
        <begin position="252"/>
        <end position="294"/>
    </location>
</feature>
<feature type="active site" description="Charge relay system; for autoendoproteolytic cleavage activity" evidence="1">
    <location>
        <position position="92"/>
    </location>
</feature>
<feature type="active site" description="Charge relay system; for autoendoproteolytic cleavage activity" evidence="1">
    <location>
        <position position="149"/>
    </location>
</feature>
<feature type="active site" description="Charge relay system; for autoendoproteolytic cleavage activity" evidence="1">
    <location>
        <position position="252"/>
    </location>
</feature>
<feature type="active site" description="Schiff-base intermediate with substrate; via pyruvic acid; for decarboxylase activity" evidence="1">
    <location>
        <position position="252"/>
    </location>
</feature>
<feature type="site" description="Cleavage (non-hydrolytic); by autocatalysis" evidence="1">
    <location>
        <begin position="251"/>
        <end position="252"/>
    </location>
</feature>
<feature type="modified residue" description="Pyruvic acid (Ser); by autocatalysis" evidence="1">
    <location>
        <position position="252"/>
    </location>
</feature>
<sequence length="294" mass="32211">MSIKDQIFLASQHLAPHHLVSRGMGLLADSRIPALKNAMISRFVQRYNVDMSEALVEDPLAYPCFNDFFTRALKPDARPLDDDSANVLSPADGTISQLGPIREGRIFQAKGHSFGLTALLGGDAERAAPFEGGDFATIYLSPRDYHRVHMPVTGTLREMVHVPGRLFSVNPLTANTVPDLFARNERVVCIFDTAYGPMAVILVGAMIVASVETVWAGLVTPHKREVRSTRYGPQEPIVLERGAEMGRFKLGSTAIVLFGPGRIRWFDTPSVRGPIRMGETLALPANHLEDVPAV</sequence>
<proteinExistence type="inferred from homology"/>
<gene>
    <name evidence="1" type="primary">psd</name>
    <name type="ordered locus">BAV1882</name>
</gene>
<accession>Q2L0K8</accession>
<protein>
    <recommendedName>
        <fullName evidence="1">Phosphatidylserine decarboxylase proenzyme</fullName>
        <ecNumber evidence="1">4.1.1.65</ecNumber>
    </recommendedName>
    <component>
        <recommendedName>
            <fullName evidence="1">Phosphatidylserine decarboxylase alpha chain</fullName>
        </recommendedName>
    </component>
    <component>
        <recommendedName>
            <fullName evidence="1">Phosphatidylserine decarboxylase beta chain</fullName>
        </recommendedName>
    </component>
</protein>
<keyword id="KW-1003">Cell membrane</keyword>
<keyword id="KW-0210">Decarboxylase</keyword>
<keyword id="KW-0444">Lipid biosynthesis</keyword>
<keyword id="KW-0443">Lipid metabolism</keyword>
<keyword id="KW-0456">Lyase</keyword>
<keyword id="KW-0472">Membrane</keyword>
<keyword id="KW-0594">Phospholipid biosynthesis</keyword>
<keyword id="KW-1208">Phospholipid metabolism</keyword>
<keyword id="KW-0670">Pyruvate</keyword>
<keyword id="KW-1185">Reference proteome</keyword>
<keyword id="KW-0865">Zymogen</keyword>